<comment type="function">
    <text evidence="1">F(1)F(0) ATP synthase produces ATP from ADP in the presence of a proton or sodium gradient. F-type ATPases consist of two structural domains, F(1) containing the extramembraneous catalytic core and F(0) containing the membrane proton channel, linked together by a central stalk and a peripheral stalk. During catalysis, ATP synthesis in the catalytic domain of F(1) is coupled via a rotary mechanism of the central stalk subunits to proton translocation.</text>
</comment>
<comment type="function">
    <text evidence="1">This protein is part of the stalk that links CF(0) to CF(1). It either transmits conformational changes from CF(0) to CF(1) or is implicated in proton conduction.</text>
</comment>
<comment type="subunit">
    <text evidence="1">F-type ATPases have 2 components, F(1) - the catalytic core - and F(0) - the membrane proton channel. F(1) has five subunits: alpha(3), beta(3), gamma(1), delta(1), epsilon(1). F(0) has three main subunits: a(1), b(2) and c(10-14). The alpha and beta chains form an alternating ring which encloses part of the gamma chain. F(1) is attached to F(0) by a central stalk formed by the gamma and epsilon chains, while a peripheral stalk is formed by the delta and b chains.</text>
</comment>
<comment type="subcellular location">
    <subcellularLocation>
        <location evidence="1">Cell inner membrane</location>
        <topology evidence="1">Peripheral membrane protein</topology>
    </subcellularLocation>
</comment>
<comment type="similarity">
    <text evidence="1">Belongs to the ATPase delta chain family.</text>
</comment>
<gene>
    <name evidence="1" type="primary">atpH</name>
    <name type="ordered locus">Bd3900</name>
</gene>
<dbReference type="EMBL" id="BX842656">
    <property type="protein sequence ID" value="CAE81255.1"/>
    <property type="molecule type" value="Genomic_DNA"/>
</dbReference>
<dbReference type="RefSeq" id="WP_011166198.1">
    <property type="nucleotide sequence ID" value="NC_005363.1"/>
</dbReference>
<dbReference type="SMR" id="Q6MGM4"/>
<dbReference type="STRING" id="264462.Bd3900"/>
<dbReference type="GeneID" id="93014666"/>
<dbReference type="KEGG" id="bba:Bd3900"/>
<dbReference type="eggNOG" id="COG0712">
    <property type="taxonomic scope" value="Bacteria"/>
</dbReference>
<dbReference type="HOGENOM" id="CLU_085114_4_0_7"/>
<dbReference type="Proteomes" id="UP000008080">
    <property type="component" value="Chromosome"/>
</dbReference>
<dbReference type="GO" id="GO:0005886">
    <property type="term" value="C:plasma membrane"/>
    <property type="evidence" value="ECO:0007669"/>
    <property type="project" value="UniProtKB-SubCell"/>
</dbReference>
<dbReference type="GO" id="GO:0045259">
    <property type="term" value="C:proton-transporting ATP synthase complex"/>
    <property type="evidence" value="ECO:0007669"/>
    <property type="project" value="UniProtKB-KW"/>
</dbReference>
<dbReference type="GO" id="GO:0046933">
    <property type="term" value="F:proton-transporting ATP synthase activity, rotational mechanism"/>
    <property type="evidence" value="ECO:0007669"/>
    <property type="project" value="UniProtKB-UniRule"/>
</dbReference>
<dbReference type="Gene3D" id="1.10.520.20">
    <property type="entry name" value="N-terminal domain of the delta subunit of the F1F0-ATP synthase"/>
    <property type="match status" value="1"/>
</dbReference>
<dbReference type="HAMAP" id="MF_01416">
    <property type="entry name" value="ATP_synth_delta_bact"/>
    <property type="match status" value="1"/>
</dbReference>
<dbReference type="InterPro" id="IPR026015">
    <property type="entry name" value="ATP_synth_OSCP/delta_N_sf"/>
</dbReference>
<dbReference type="InterPro" id="IPR000711">
    <property type="entry name" value="ATPase_OSCP/dsu"/>
</dbReference>
<dbReference type="NCBIfam" id="TIGR01145">
    <property type="entry name" value="ATP_synt_delta"/>
    <property type="match status" value="1"/>
</dbReference>
<dbReference type="PANTHER" id="PTHR11910">
    <property type="entry name" value="ATP SYNTHASE DELTA CHAIN"/>
    <property type="match status" value="1"/>
</dbReference>
<dbReference type="Pfam" id="PF00213">
    <property type="entry name" value="OSCP"/>
    <property type="match status" value="1"/>
</dbReference>
<dbReference type="PRINTS" id="PR00125">
    <property type="entry name" value="ATPASEDELTA"/>
</dbReference>
<dbReference type="SUPFAM" id="SSF47928">
    <property type="entry name" value="N-terminal domain of the delta subunit of the F1F0-ATP synthase"/>
    <property type="match status" value="1"/>
</dbReference>
<name>ATPD_BDEBA</name>
<accession>Q6MGM4</accession>
<keyword id="KW-0066">ATP synthesis</keyword>
<keyword id="KW-0997">Cell inner membrane</keyword>
<keyword id="KW-1003">Cell membrane</keyword>
<keyword id="KW-0139">CF(1)</keyword>
<keyword id="KW-0375">Hydrogen ion transport</keyword>
<keyword id="KW-0406">Ion transport</keyword>
<keyword id="KW-0472">Membrane</keyword>
<keyword id="KW-1185">Reference proteome</keyword>
<keyword id="KW-0813">Transport</keyword>
<feature type="chain" id="PRO_0000382059" description="ATP synthase subunit delta">
    <location>
        <begin position="1"/>
        <end position="182"/>
    </location>
</feature>
<reference key="1">
    <citation type="journal article" date="2004" name="Science">
        <title>A predator unmasked: life cycle of Bdellovibrio bacteriovorus from a genomic perspective.</title>
        <authorList>
            <person name="Rendulic S."/>
            <person name="Jagtap P."/>
            <person name="Rosinus A."/>
            <person name="Eppinger M."/>
            <person name="Baar C."/>
            <person name="Lanz C."/>
            <person name="Keller H."/>
            <person name="Lambert C."/>
            <person name="Evans K.J."/>
            <person name="Goesmann A."/>
            <person name="Meyer F."/>
            <person name="Sockett R.E."/>
            <person name="Schuster S.C."/>
        </authorList>
    </citation>
    <scope>NUCLEOTIDE SEQUENCE [LARGE SCALE GENOMIC DNA]</scope>
    <source>
        <strain>ATCC 15356 / DSM 50701 / NCIMB 9529 / HD100</strain>
    </source>
</reference>
<organism>
    <name type="scientific">Bdellovibrio bacteriovorus (strain ATCC 15356 / DSM 50701 / NCIMB 9529 / HD100)</name>
    <dbReference type="NCBI Taxonomy" id="264462"/>
    <lineage>
        <taxon>Bacteria</taxon>
        <taxon>Pseudomonadati</taxon>
        <taxon>Bdellovibrionota</taxon>
        <taxon>Bdellovibrionia</taxon>
        <taxon>Bdellovibrionales</taxon>
        <taxon>Pseudobdellovibrionaceae</taxon>
        <taxon>Bdellovibrio</taxon>
    </lineage>
</organism>
<protein>
    <recommendedName>
        <fullName evidence="1">ATP synthase subunit delta</fullName>
    </recommendedName>
    <alternativeName>
        <fullName evidence="1">ATP synthase F(1) sector subunit delta</fullName>
    </alternativeName>
    <alternativeName>
        <fullName evidence="1">F-type ATPase subunit delta</fullName>
        <shortName evidence="1">F-ATPase subunit delta</shortName>
    </alternativeName>
</protein>
<evidence type="ECO:0000255" key="1">
    <source>
        <dbReference type="HAMAP-Rule" id="MF_01416"/>
    </source>
</evidence>
<sequence>MRVSEISKRYAKALLAVAKQKGIHTQVHAELQALVKSFAGDVSVKNYFENPMIGSDQKIAAVKASLSGKGVSEEVVNTLVLLAEKNRFGVLEQISFAYRDLLDLEEGVTRGVVRSAQPLAADAQKDIEQKITKVLNKKIVLTYEQDPKLLGGIVATVGGWTFDDSIDTHLKKLNEELNRRAN</sequence>
<proteinExistence type="inferred from homology"/>